<organism>
    <name type="scientific">Bacillus subtilis (strain 168)</name>
    <dbReference type="NCBI Taxonomy" id="224308"/>
    <lineage>
        <taxon>Bacteria</taxon>
        <taxon>Bacillati</taxon>
        <taxon>Bacillota</taxon>
        <taxon>Bacilli</taxon>
        <taxon>Bacillales</taxon>
        <taxon>Bacillaceae</taxon>
        <taxon>Bacillus</taxon>
    </lineage>
</organism>
<dbReference type="EMBL" id="AL009126">
    <property type="protein sequence ID" value="CAB13974.1"/>
    <property type="molecule type" value="Genomic_DNA"/>
</dbReference>
<dbReference type="RefSeq" id="NP_389964.1">
    <property type="nucleotide sequence ID" value="NC_000964.3"/>
</dbReference>
<dbReference type="RefSeq" id="WP_004399407.1">
    <property type="nucleotide sequence ID" value="NZ_OZ025638.1"/>
</dbReference>
<dbReference type="SMR" id="O34791"/>
<dbReference type="FunCoup" id="O34791">
    <property type="interactions" value="5"/>
</dbReference>
<dbReference type="STRING" id="224308.BSU20820"/>
<dbReference type="PaxDb" id="224308-BSU20820"/>
<dbReference type="EnsemblBacteria" id="CAB13974">
    <property type="protein sequence ID" value="CAB13974"/>
    <property type="gene ID" value="BSU_20820"/>
</dbReference>
<dbReference type="GeneID" id="939435"/>
<dbReference type="KEGG" id="bsu:BSU20820"/>
<dbReference type="PATRIC" id="fig|224308.179.peg.2272"/>
<dbReference type="InParanoid" id="O34791"/>
<dbReference type="OrthoDB" id="9801008at2"/>
<dbReference type="BioCyc" id="BSUB:BSU20820-MONOMER"/>
<dbReference type="Proteomes" id="UP000001570">
    <property type="component" value="Chromosome"/>
</dbReference>
<dbReference type="GO" id="GO:0003677">
    <property type="term" value="F:DNA binding"/>
    <property type="evidence" value="ECO:0007669"/>
    <property type="project" value="UniProtKB-KW"/>
</dbReference>
<dbReference type="CDD" id="cd00093">
    <property type="entry name" value="HTH_XRE"/>
    <property type="match status" value="1"/>
</dbReference>
<dbReference type="Gene3D" id="1.10.260.40">
    <property type="entry name" value="lambda repressor-like DNA-binding domains"/>
    <property type="match status" value="1"/>
</dbReference>
<dbReference type="InterPro" id="IPR001387">
    <property type="entry name" value="Cro/C1-type_HTH"/>
</dbReference>
<dbReference type="InterPro" id="IPR010982">
    <property type="entry name" value="Lambda_DNA-bd_dom_sf"/>
</dbReference>
<dbReference type="Pfam" id="PF01381">
    <property type="entry name" value="HTH_3"/>
    <property type="match status" value="1"/>
</dbReference>
<dbReference type="SMART" id="SM00530">
    <property type="entry name" value="HTH_XRE"/>
    <property type="match status" value="1"/>
</dbReference>
<dbReference type="SUPFAM" id="SSF47413">
    <property type="entry name" value="lambda repressor-like DNA-binding domains"/>
    <property type="match status" value="1"/>
</dbReference>
<dbReference type="PROSITE" id="PS50943">
    <property type="entry name" value="HTH_CROC1"/>
    <property type="match status" value="1"/>
</dbReference>
<sequence>MSERIKQLMVKRGITIEELSRETMIDMQTLNKIIEMPDESDVTTIKLIALVLNVSIDELLDEKGGEDNAK</sequence>
<keyword id="KW-0238">DNA-binding</keyword>
<keyword id="KW-1185">Reference proteome</keyword>
<keyword id="KW-0804">Transcription</keyword>
<keyword id="KW-0805">Transcription regulation</keyword>
<reference key="1">
    <citation type="journal article" date="1997" name="Nature">
        <title>The complete genome sequence of the Gram-positive bacterium Bacillus subtilis.</title>
        <authorList>
            <person name="Kunst F."/>
            <person name="Ogasawara N."/>
            <person name="Moszer I."/>
            <person name="Albertini A.M."/>
            <person name="Alloni G."/>
            <person name="Azevedo V."/>
            <person name="Bertero M.G."/>
            <person name="Bessieres P."/>
            <person name="Bolotin A."/>
            <person name="Borchert S."/>
            <person name="Borriss R."/>
            <person name="Boursier L."/>
            <person name="Brans A."/>
            <person name="Braun M."/>
            <person name="Brignell S.C."/>
            <person name="Bron S."/>
            <person name="Brouillet S."/>
            <person name="Bruschi C.V."/>
            <person name="Caldwell B."/>
            <person name="Capuano V."/>
            <person name="Carter N.M."/>
            <person name="Choi S.-K."/>
            <person name="Codani J.-J."/>
            <person name="Connerton I.F."/>
            <person name="Cummings N.J."/>
            <person name="Daniel R.A."/>
            <person name="Denizot F."/>
            <person name="Devine K.M."/>
            <person name="Duesterhoeft A."/>
            <person name="Ehrlich S.D."/>
            <person name="Emmerson P.T."/>
            <person name="Entian K.-D."/>
            <person name="Errington J."/>
            <person name="Fabret C."/>
            <person name="Ferrari E."/>
            <person name="Foulger D."/>
            <person name="Fritz C."/>
            <person name="Fujita M."/>
            <person name="Fujita Y."/>
            <person name="Fuma S."/>
            <person name="Galizzi A."/>
            <person name="Galleron N."/>
            <person name="Ghim S.-Y."/>
            <person name="Glaser P."/>
            <person name="Goffeau A."/>
            <person name="Golightly E.J."/>
            <person name="Grandi G."/>
            <person name="Guiseppi G."/>
            <person name="Guy B.J."/>
            <person name="Haga K."/>
            <person name="Haiech J."/>
            <person name="Harwood C.R."/>
            <person name="Henaut A."/>
            <person name="Hilbert H."/>
            <person name="Holsappel S."/>
            <person name="Hosono S."/>
            <person name="Hullo M.-F."/>
            <person name="Itaya M."/>
            <person name="Jones L.-M."/>
            <person name="Joris B."/>
            <person name="Karamata D."/>
            <person name="Kasahara Y."/>
            <person name="Klaerr-Blanchard M."/>
            <person name="Klein C."/>
            <person name="Kobayashi Y."/>
            <person name="Koetter P."/>
            <person name="Koningstein G."/>
            <person name="Krogh S."/>
            <person name="Kumano M."/>
            <person name="Kurita K."/>
            <person name="Lapidus A."/>
            <person name="Lardinois S."/>
            <person name="Lauber J."/>
            <person name="Lazarevic V."/>
            <person name="Lee S.-M."/>
            <person name="Levine A."/>
            <person name="Liu H."/>
            <person name="Masuda S."/>
            <person name="Mauel C."/>
            <person name="Medigue C."/>
            <person name="Medina N."/>
            <person name="Mellado R.P."/>
            <person name="Mizuno M."/>
            <person name="Moestl D."/>
            <person name="Nakai S."/>
            <person name="Noback M."/>
            <person name="Noone D."/>
            <person name="O'Reilly M."/>
            <person name="Ogawa K."/>
            <person name="Ogiwara A."/>
            <person name="Oudega B."/>
            <person name="Park S.-H."/>
            <person name="Parro V."/>
            <person name="Pohl T.M."/>
            <person name="Portetelle D."/>
            <person name="Porwollik S."/>
            <person name="Prescott A.M."/>
            <person name="Presecan E."/>
            <person name="Pujic P."/>
            <person name="Purnelle B."/>
            <person name="Rapoport G."/>
            <person name="Rey M."/>
            <person name="Reynolds S."/>
            <person name="Rieger M."/>
            <person name="Rivolta C."/>
            <person name="Rocha E."/>
            <person name="Roche B."/>
            <person name="Rose M."/>
            <person name="Sadaie Y."/>
            <person name="Sato T."/>
            <person name="Scanlan E."/>
            <person name="Schleich S."/>
            <person name="Schroeter R."/>
            <person name="Scoffone F."/>
            <person name="Sekiguchi J."/>
            <person name="Sekowska A."/>
            <person name="Seror S.J."/>
            <person name="Serror P."/>
            <person name="Shin B.-S."/>
            <person name="Soldo B."/>
            <person name="Sorokin A."/>
            <person name="Tacconi E."/>
            <person name="Takagi T."/>
            <person name="Takahashi H."/>
            <person name="Takemaru K."/>
            <person name="Takeuchi M."/>
            <person name="Tamakoshi A."/>
            <person name="Tanaka T."/>
            <person name="Terpstra P."/>
            <person name="Tognoni A."/>
            <person name="Tosato V."/>
            <person name="Uchiyama S."/>
            <person name="Vandenbol M."/>
            <person name="Vannier F."/>
            <person name="Vassarotti A."/>
            <person name="Viari A."/>
            <person name="Wambutt R."/>
            <person name="Wedler E."/>
            <person name="Wedler H."/>
            <person name="Weitzenegger T."/>
            <person name="Winters P."/>
            <person name="Wipat A."/>
            <person name="Yamamoto H."/>
            <person name="Yamane K."/>
            <person name="Yasumoto K."/>
            <person name="Yata K."/>
            <person name="Yoshida K."/>
            <person name="Yoshikawa H.-F."/>
            <person name="Zumstein E."/>
            <person name="Yoshikawa H."/>
            <person name="Danchin A."/>
        </authorList>
    </citation>
    <scope>NUCLEOTIDE SEQUENCE [LARGE SCALE GENOMIC DNA]</scope>
    <source>
        <strain>168</strain>
    </source>
</reference>
<proteinExistence type="predicted"/>
<accession>O34791</accession>
<name>YOPO_BACSU</name>
<evidence type="ECO:0000255" key="1">
    <source>
        <dbReference type="PROSITE-ProRule" id="PRU00257"/>
    </source>
</evidence>
<gene>
    <name type="primary">yopO</name>
    <name type="ordered locus">BSU20820</name>
</gene>
<feature type="chain" id="PRO_0000383639" description="SPbeta prophage-derived uncharacterized HTH-type transcriptional regulator YopO">
    <location>
        <begin position="1"/>
        <end position="70"/>
    </location>
</feature>
<feature type="domain" description="HTH cro/C1-type" evidence="1">
    <location>
        <begin position="5"/>
        <end position="59"/>
    </location>
</feature>
<feature type="DNA-binding region" description="H-T-H motif" evidence="1">
    <location>
        <begin position="16"/>
        <end position="35"/>
    </location>
</feature>
<protein>
    <recommendedName>
        <fullName>SPbeta prophage-derived uncharacterized HTH-type transcriptional regulator YopO</fullName>
    </recommendedName>
</protein>